<dbReference type="EC" id="1.1.-.-" evidence="7"/>
<dbReference type="EMBL" id="AZNH01000023">
    <property type="protein sequence ID" value="KID86243.1"/>
    <property type="molecule type" value="Genomic_DNA"/>
</dbReference>
<dbReference type="SMR" id="A0A0B4GU97"/>
<dbReference type="HOGENOM" id="CLU_010194_1_3_1"/>
<dbReference type="OrthoDB" id="4954at5529"/>
<dbReference type="Proteomes" id="UP000031192">
    <property type="component" value="Unassembled WGS sequence"/>
</dbReference>
<dbReference type="GO" id="GO:0016491">
    <property type="term" value="F:oxidoreductase activity"/>
    <property type="evidence" value="ECO:0007669"/>
    <property type="project" value="UniProtKB-KW"/>
</dbReference>
<dbReference type="FunFam" id="3.40.50.720:FF:000084">
    <property type="entry name" value="Short-chain dehydrogenase reductase"/>
    <property type="match status" value="1"/>
</dbReference>
<dbReference type="Gene3D" id="3.40.50.720">
    <property type="entry name" value="NAD(P)-binding Rossmann-like Domain"/>
    <property type="match status" value="1"/>
</dbReference>
<dbReference type="InterPro" id="IPR036291">
    <property type="entry name" value="NAD(P)-bd_dom_sf"/>
</dbReference>
<dbReference type="InterPro" id="IPR020904">
    <property type="entry name" value="Sc_DH/Rdtase_CS"/>
</dbReference>
<dbReference type="InterPro" id="IPR002347">
    <property type="entry name" value="SDR_fam"/>
</dbReference>
<dbReference type="PANTHER" id="PTHR43639">
    <property type="entry name" value="OXIDOREDUCTASE, SHORT-CHAIN DEHYDROGENASE/REDUCTASE FAMILY (AFU_ORTHOLOGUE AFUA_5G02870)"/>
    <property type="match status" value="1"/>
</dbReference>
<dbReference type="PANTHER" id="PTHR43639:SF1">
    <property type="entry name" value="SHORT-CHAIN DEHYDROGENASE_REDUCTASE FAMILY PROTEIN"/>
    <property type="match status" value="1"/>
</dbReference>
<dbReference type="Pfam" id="PF13561">
    <property type="entry name" value="adh_short_C2"/>
    <property type="match status" value="1"/>
</dbReference>
<dbReference type="PRINTS" id="PR00081">
    <property type="entry name" value="GDHRDH"/>
</dbReference>
<dbReference type="PRINTS" id="PR00080">
    <property type="entry name" value="SDRFAMILY"/>
</dbReference>
<dbReference type="SMART" id="SM00822">
    <property type="entry name" value="PKS_KR"/>
    <property type="match status" value="1"/>
</dbReference>
<dbReference type="SUPFAM" id="SSF51735">
    <property type="entry name" value="NAD(P)-binding Rossmann-fold domains"/>
    <property type="match status" value="1"/>
</dbReference>
<dbReference type="PROSITE" id="PS00061">
    <property type="entry name" value="ADH_SHORT"/>
    <property type="match status" value="1"/>
</dbReference>
<proteinExistence type="inferred from homology"/>
<organism>
    <name type="scientific">Metarhizium guizhouense (strain ARSEF 977)</name>
    <dbReference type="NCBI Taxonomy" id="1276136"/>
    <lineage>
        <taxon>Eukaryota</taxon>
        <taxon>Fungi</taxon>
        <taxon>Dikarya</taxon>
        <taxon>Ascomycota</taxon>
        <taxon>Pezizomycotina</taxon>
        <taxon>Sordariomycetes</taxon>
        <taxon>Hypocreomycetidae</taxon>
        <taxon>Hypocreales</taxon>
        <taxon>Clavicipitaceae</taxon>
        <taxon>Metarhizium</taxon>
    </lineage>
</organism>
<gene>
    <name evidence="5" type="primary">Arp2</name>
    <name type="ORF">MGU_06676</name>
</gene>
<evidence type="ECO:0000250" key="1">
    <source>
        <dbReference type="UniProtKB" id="L0E2Z4"/>
    </source>
</evidence>
<evidence type="ECO:0000250" key="2">
    <source>
        <dbReference type="UniProtKB" id="O93868"/>
    </source>
</evidence>
<evidence type="ECO:0000255" key="3">
    <source>
        <dbReference type="PROSITE-ProRule" id="PRU10001"/>
    </source>
</evidence>
<evidence type="ECO:0000269" key="4">
    <source>
    </source>
</evidence>
<evidence type="ECO:0000303" key="5">
    <source>
    </source>
</evidence>
<evidence type="ECO:0000305" key="6"/>
<evidence type="ECO:0000305" key="7">
    <source>
    </source>
</evidence>
<protein>
    <recommendedName>
        <fullName evidence="5">Hydroxynaphthalene reductase-like protein Arp2</fullName>
        <ecNumber evidence="7">1.1.-.-</ecNumber>
    </recommendedName>
</protein>
<name>ARP2_METGA</name>
<sequence length="267" mass="28366">MASSEETPRSLAGKVALVTGAGRGIGKGIAVELAKRGASVVVNYNSAEKPAQEVVDEIAKTGSRAVAIKADITKVPEVSRLFQEALQHFGHLDIVVSNSGTEVFKPEDEVTEEDYDRVFNLNTRAQFFIAQHAYVHLRNGGRIVLMSSVAANMSGIPNHALYAGSKAAVEGFTRSFAVDAGHKKITVNAIAPGGVKTDMYDANAWHYVPNGKPGMPMEEIDKGLAAFCPLGRVAVPQDIGRVVAFLAHPDSEWVNGQVILLTGGSVT</sequence>
<reference key="1">
    <citation type="journal article" date="2014" name="Proc. Natl. Acad. Sci. U.S.A.">
        <title>Trajectory and genomic determinants of fungal-pathogen speciation and host adaptation.</title>
        <authorList>
            <person name="Hu X."/>
            <person name="Xiao G."/>
            <person name="Zheng P."/>
            <person name="Shang Y."/>
            <person name="Su Y."/>
            <person name="Zhang X."/>
            <person name="Liu X."/>
            <person name="Zhan S."/>
            <person name="St Leger R.J."/>
            <person name="Wang C."/>
        </authorList>
    </citation>
    <scope>NUCLEOTIDE SEQUENCE [LARGE SCALE GENOMIC DNA]</scope>
    <source>
        <strain>ARSEF 977</strain>
    </source>
</reference>
<reference key="2">
    <citation type="journal article" date="2018" name="PLoS Genet.">
        <title>Duplication of a Pks gene cluster and subsequent functional diversification facilitate environmental adaptation in Metarhizium species.</title>
        <authorList>
            <person name="Zeng G."/>
            <person name="Zhang P."/>
            <person name="Zhang Q."/>
            <person name="Zhao H."/>
            <person name="Li Z."/>
            <person name="Zhang X."/>
            <person name="Wang C."/>
            <person name="Yin W.B."/>
            <person name="Fang W."/>
        </authorList>
    </citation>
    <scope>IDENTIFICATION</scope>
    <scope>FUNCTION</scope>
</reference>
<comment type="function">
    <text evidence="4">Hydroxynaphthalene reductase-like protein; part of the Pks2 gene cluster that mediates the formation of infectious structures (appressoria), enabling these fungi to kill insects faster (PubMed:29958281). The product of the Pks2 gene cluster is different from the one of Pks1 and has still not been identified (PubMed:29958281).</text>
</comment>
<comment type="similarity">
    <text evidence="6">Belongs to the short-chain dehydrogenases/reductases (SDR) family.</text>
</comment>
<feature type="chain" id="PRO_0000445815" description="Hydroxynaphthalene reductase-like protein Arp2">
    <location>
        <begin position="1"/>
        <end position="267"/>
    </location>
</feature>
<feature type="active site" description="Proton donor" evidence="2">
    <location>
        <position position="147"/>
    </location>
</feature>
<feature type="active site" description="Proton donor" evidence="2">
    <location>
        <position position="148"/>
    </location>
</feature>
<feature type="active site" description="Proton acceptor" evidence="3">
    <location>
        <position position="162"/>
    </location>
</feature>
<feature type="active site" description="Lowers pKa of active site Tyr" evidence="2">
    <location>
        <position position="166"/>
    </location>
</feature>
<feature type="binding site" evidence="1">
    <location>
        <position position="25"/>
    </location>
    <ligand>
        <name>NADP(+)</name>
        <dbReference type="ChEBI" id="CHEBI:58349"/>
    </ligand>
</feature>
<feature type="binding site" evidence="1">
    <location>
        <position position="45"/>
    </location>
    <ligand>
        <name>NADP(+)</name>
        <dbReference type="ChEBI" id="CHEBI:58349"/>
    </ligand>
</feature>
<feature type="binding site" evidence="1">
    <location>
        <position position="71"/>
    </location>
    <ligand>
        <name>NADP(+)</name>
        <dbReference type="ChEBI" id="CHEBI:58349"/>
    </ligand>
</feature>
<feature type="binding site" evidence="2">
    <location>
        <position position="98"/>
    </location>
    <ligand>
        <name>NADP(+)</name>
        <dbReference type="ChEBI" id="CHEBI:58349"/>
    </ligand>
</feature>
<feature type="binding site" evidence="2">
    <location>
        <position position="162"/>
    </location>
    <ligand>
        <name>NADP(+)</name>
        <dbReference type="ChEBI" id="CHEBI:58349"/>
    </ligand>
</feature>
<feature type="binding site" evidence="2">
    <location>
        <position position="166"/>
    </location>
    <ligand>
        <name>NADP(+)</name>
        <dbReference type="ChEBI" id="CHEBI:58349"/>
    </ligand>
</feature>
<feature type="binding site" evidence="2">
    <location>
        <position position="195"/>
    </location>
    <ligand>
        <name>NADP(+)</name>
        <dbReference type="ChEBI" id="CHEBI:58349"/>
    </ligand>
</feature>
<feature type="binding site" evidence="1">
    <location>
        <position position="197"/>
    </location>
    <ligand>
        <name>NADP(+)</name>
        <dbReference type="ChEBI" id="CHEBI:58349"/>
    </ligand>
</feature>
<keyword id="KW-0521">NADP</keyword>
<keyword id="KW-0560">Oxidoreductase</keyword>
<accession>A0A0B4GU97</accession>